<reference key="1">
    <citation type="journal article" date="2003" name="Science">
        <title>Role of mobile DNA in the evolution of vancomycin-resistant Enterococcus faecalis.</title>
        <authorList>
            <person name="Paulsen I.T."/>
            <person name="Banerjei L."/>
            <person name="Myers G.S.A."/>
            <person name="Nelson K.E."/>
            <person name="Seshadri R."/>
            <person name="Read T.D."/>
            <person name="Fouts D.E."/>
            <person name="Eisen J.A."/>
            <person name="Gill S.R."/>
            <person name="Heidelberg J.F."/>
            <person name="Tettelin H."/>
            <person name="Dodson R.J."/>
            <person name="Umayam L.A."/>
            <person name="Brinkac L.M."/>
            <person name="Beanan M.J."/>
            <person name="Daugherty S.C."/>
            <person name="DeBoy R.T."/>
            <person name="Durkin S.A."/>
            <person name="Kolonay J.F."/>
            <person name="Madupu R."/>
            <person name="Nelson W.C."/>
            <person name="Vamathevan J.J."/>
            <person name="Tran B."/>
            <person name="Upton J."/>
            <person name="Hansen T."/>
            <person name="Shetty J."/>
            <person name="Khouri H.M."/>
            <person name="Utterback T.R."/>
            <person name="Radune D."/>
            <person name="Ketchum K.A."/>
            <person name="Dougherty B.A."/>
            <person name="Fraser C.M."/>
        </authorList>
    </citation>
    <scope>NUCLEOTIDE SEQUENCE [LARGE SCALE GENOMIC DNA]</scope>
    <source>
        <strain>ATCC 700802 / V583</strain>
    </source>
</reference>
<evidence type="ECO:0000250" key="1"/>
<evidence type="ECO:0000255" key="2">
    <source>
        <dbReference type="HAMAP-Rule" id="MF_00403"/>
    </source>
</evidence>
<evidence type="ECO:0000256" key="3">
    <source>
        <dbReference type="SAM" id="MobiDB-lite"/>
    </source>
</evidence>
<evidence type="ECO:0000305" key="4"/>
<evidence type="ECO:0007829" key="5">
    <source>
        <dbReference type="PDB" id="6WUB"/>
    </source>
</evidence>
<keyword id="KW-0002">3D-structure</keyword>
<keyword id="KW-0488">Methylation</keyword>
<keyword id="KW-1185">Reference proteome</keyword>
<keyword id="KW-0687">Ribonucleoprotein</keyword>
<keyword id="KW-0689">Ribosomal protein</keyword>
<keyword id="KW-0694">RNA-binding</keyword>
<keyword id="KW-0699">rRNA-binding</keyword>
<keyword id="KW-0820">tRNA-binding</keyword>
<dbReference type="EMBL" id="AE016830">
    <property type="protein sequence ID" value="AAO80068.1"/>
    <property type="molecule type" value="Genomic_DNA"/>
</dbReference>
<dbReference type="RefSeq" id="NP_813997.1">
    <property type="nucleotide sequence ID" value="NC_004668.1"/>
</dbReference>
<dbReference type="RefSeq" id="WP_002356190.1">
    <property type="nucleotide sequence ID" value="NZ_KE136524.1"/>
</dbReference>
<dbReference type="PDB" id="6WUB">
    <property type="method" value="EM"/>
    <property type="resolution" value="3.20 A"/>
    <property type="chains" value="l=2-137"/>
</dbReference>
<dbReference type="PDB" id="7P7Q">
    <property type="method" value="EM"/>
    <property type="resolution" value="2.40 A"/>
    <property type="chains" value="m=1-137"/>
</dbReference>
<dbReference type="PDB" id="7P7R">
    <property type="method" value="EM"/>
    <property type="resolution" value="2.90 A"/>
    <property type="chains" value="m=1-137"/>
</dbReference>
<dbReference type="PDBsum" id="6WUB"/>
<dbReference type="PDBsum" id="7P7Q"/>
<dbReference type="PDBsum" id="7P7R"/>
<dbReference type="EMDB" id="EMD-13241"/>
<dbReference type="EMDB" id="EMD-13242"/>
<dbReference type="SMR" id="Q839H1"/>
<dbReference type="STRING" id="226185.EF_0198"/>
<dbReference type="EnsemblBacteria" id="AAO80068">
    <property type="protein sequence ID" value="AAO80068"/>
    <property type="gene ID" value="EF_0198"/>
</dbReference>
<dbReference type="GeneID" id="60892694"/>
<dbReference type="KEGG" id="efa:EF0198"/>
<dbReference type="PATRIC" id="fig|226185.45.peg.68"/>
<dbReference type="eggNOG" id="COG0048">
    <property type="taxonomic scope" value="Bacteria"/>
</dbReference>
<dbReference type="HOGENOM" id="CLU_104295_1_1_9"/>
<dbReference type="Proteomes" id="UP000001415">
    <property type="component" value="Chromosome"/>
</dbReference>
<dbReference type="GO" id="GO:0015935">
    <property type="term" value="C:small ribosomal subunit"/>
    <property type="evidence" value="ECO:0007669"/>
    <property type="project" value="InterPro"/>
</dbReference>
<dbReference type="GO" id="GO:0019843">
    <property type="term" value="F:rRNA binding"/>
    <property type="evidence" value="ECO:0007669"/>
    <property type="project" value="UniProtKB-UniRule"/>
</dbReference>
<dbReference type="GO" id="GO:0003735">
    <property type="term" value="F:structural constituent of ribosome"/>
    <property type="evidence" value="ECO:0007669"/>
    <property type="project" value="InterPro"/>
</dbReference>
<dbReference type="GO" id="GO:0000049">
    <property type="term" value="F:tRNA binding"/>
    <property type="evidence" value="ECO:0007669"/>
    <property type="project" value="UniProtKB-UniRule"/>
</dbReference>
<dbReference type="GO" id="GO:0006412">
    <property type="term" value="P:translation"/>
    <property type="evidence" value="ECO:0007669"/>
    <property type="project" value="UniProtKB-UniRule"/>
</dbReference>
<dbReference type="CDD" id="cd03368">
    <property type="entry name" value="Ribosomal_S12"/>
    <property type="match status" value="1"/>
</dbReference>
<dbReference type="FunFam" id="2.40.50.140:FF:000001">
    <property type="entry name" value="30S ribosomal protein S12"/>
    <property type="match status" value="1"/>
</dbReference>
<dbReference type="Gene3D" id="2.40.50.140">
    <property type="entry name" value="Nucleic acid-binding proteins"/>
    <property type="match status" value="1"/>
</dbReference>
<dbReference type="HAMAP" id="MF_00403_B">
    <property type="entry name" value="Ribosomal_uS12_B"/>
    <property type="match status" value="1"/>
</dbReference>
<dbReference type="InterPro" id="IPR012340">
    <property type="entry name" value="NA-bd_OB-fold"/>
</dbReference>
<dbReference type="InterPro" id="IPR006032">
    <property type="entry name" value="Ribosomal_uS12"/>
</dbReference>
<dbReference type="InterPro" id="IPR005679">
    <property type="entry name" value="Ribosomal_uS12_bac"/>
</dbReference>
<dbReference type="NCBIfam" id="TIGR00981">
    <property type="entry name" value="rpsL_bact"/>
    <property type="match status" value="1"/>
</dbReference>
<dbReference type="PANTHER" id="PTHR11652">
    <property type="entry name" value="30S RIBOSOMAL PROTEIN S12 FAMILY MEMBER"/>
    <property type="match status" value="1"/>
</dbReference>
<dbReference type="Pfam" id="PF00164">
    <property type="entry name" value="Ribosom_S12_S23"/>
    <property type="match status" value="1"/>
</dbReference>
<dbReference type="PIRSF" id="PIRSF002133">
    <property type="entry name" value="Ribosomal_S12/S23"/>
    <property type="match status" value="1"/>
</dbReference>
<dbReference type="PRINTS" id="PR01034">
    <property type="entry name" value="RIBOSOMALS12"/>
</dbReference>
<dbReference type="SUPFAM" id="SSF50249">
    <property type="entry name" value="Nucleic acid-binding proteins"/>
    <property type="match status" value="1"/>
</dbReference>
<dbReference type="PROSITE" id="PS00055">
    <property type="entry name" value="RIBOSOMAL_S12"/>
    <property type="match status" value="1"/>
</dbReference>
<name>RS12_ENTFA</name>
<organism>
    <name type="scientific">Enterococcus faecalis (strain ATCC 700802 / V583)</name>
    <dbReference type="NCBI Taxonomy" id="226185"/>
    <lineage>
        <taxon>Bacteria</taxon>
        <taxon>Bacillati</taxon>
        <taxon>Bacillota</taxon>
        <taxon>Bacilli</taxon>
        <taxon>Lactobacillales</taxon>
        <taxon>Enterococcaceae</taxon>
        <taxon>Enterococcus</taxon>
    </lineage>
</organism>
<gene>
    <name evidence="2" type="primary">rpsL</name>
    <name type="ordered locus">EF_0198</name>
</gene>
<sequence>MPTINQLVRKPRKSKVEKSDSPALNKGYNSFKKTQTNVNSPQKRGVCTRVGTMTPKKPNSALRKYARVRLSNLIEVTAYIPGIGHNLQEHSVVLLRGGRVKDLPGVRYHIVRGALDTAGVNDRKQSRSKYGTKRPKA</sequence>
<comment type="function">
    <text evidence="2">With S4 and S5 plays an important role in translational accuracy.</text>
</comment>
<comment type="function">
    <text evidence="2">Interacts with and stabilizes bases of the 16S rRNA that are involved in tRNA selection in the A site and with the mRNA backbone. Located at the interface of the 30S and 50S subunits, it traverses the body of the 30S subunit contacting proteins on the other side and probably holding the rRNA structure together. The combined cluster of proteins S8, S12 and S17 appears to hold together the shoulder and platform of the 30S subunit.</text>
</comment>
<comment type="subunit">
    <text evidence="2">Part of the 30S ribosomal subunit. Contacts proteins S8 and S17. May interact with IF1 in the 30S initiation complex.</text>
</comment>
<comment type="similarity">
    <text evidence="2">Belongs to the universal ribosomal protein uS12 family.</text>
</comment>
<protein>
    <recommendedName>
        <fullName evidence="2">Small ribosomal subunit protein uS12</fullName>
    </recommendedName>
    <alternativeName>
        <fullName evidence="4">30S ribosomal protein S12</fullName>
    </alternativeName>
</protein>
<proteinExistence type="evidence at protein level"/>
<accession>Q839H1</accession>
<feature type="chain" id="PRO_0000146223" description="Small ribosomal subunit protein uS12">
    <location>
        <begin position="1"/>
        <end position="137"/>
    </location>
</feature>
<feature type="region of interest" description="Disordered" evidence="3">
    <location>
        <begin position="1"/>
        <end position="55"/>
    </location>
</feature>
<feature type="compositionally biased region" description="Polar residues" evidence="3">
    <location>
        <begin position="27"/>
        <end position="42"/>
    </location>
</feature>
<feature type="modified residue" description="3-methylthioaspartic acid" evidence="1">
    <location>
        <position position="102"/>
    </location>
</feature>
<feature type="helix" evidence="5">
    <location>
        <begin position="4"/>
        <end position="9"/>
    </location>
</feature>
<feature type="helix" evidence="5">
    <location>
        <begin position="22"/>
        <end position="24"/>
    </location>
</feature>
<feature type="strand" evidence="5">
    <location>
        <begin position="30"/>
        <end position="32"/>
    </location>
</feature>
<feature type="strand" evidence="5">
    <location>
        <begin position="43"/>
        <end position="53"/>
    </location>
</feature>
<feature type="strand" evidence="5">
    <location>
        <begin position="63"/>
        <end position="70"/>
    </location>
</feature>
<feature type="strand" evidence="5">
    <location>
        <begin position="75"/>
        <end position="79"/>
    </location>
</feature>
<feature type="strand" evidence="5">
    <location>
        <begin position="92"/>
        <end position="97"/>
    </location>
</feature>
<feature type="strand" evidence="5">
    <location>
        <begin position="101"/>
        <end position="103"/>
    </location>
</feature>
<feature type="strand" evidence="5">
    <location>
        <begin position="106"/>
        <end position="110"/>
    </location>
</feature>
<feature type="strand" evidence="5">
    <location>
        <begin position="114"/>
        <end position="117"/>
    </location>
</feature>
<feature type="turn" evidence="5">
    <location>
        <begin position="127"/>
        <end position="131"/>
    </location>
</feature>